<protein>
    <recommendedName>
        <fullName evidence="1">Putative pre-16S rRNA nuclease</fullName>
        <ecNumber evidence="1">3.1.-.-</ecNumber>
    </recommendedName>
</protein>
<accession>Q3AYS6</accession>
<proteinExistence type="inferred from homology"/>
<feature type="chain" id="PRO_0000257606" description="Putative pre-16S rRNA nuclease">
    <location>
        <begin position="1"/>
        <end position="164"/>
    </location>
</feature>
<reference key="1">
    <citation type="submission" date="2005-08" db="EMBL/GenBank/DDBJ databases">
        <title>Complete sequence of Synechococcus sp. CC9902.</title>
        <authorList>
            <person name="Copeland A."/>
            <person name="Lucas S."/>
            <person name="Lapidus A."/>
            <person name="Barry K."/>
            <person name="Detter J.C."/>
            <person name="Glavina T."/>
            <person name="Hammon N."/>
            <person name="Israni S."/>
            <person name="Pitluck S."/>
            <person name="Martinez M."/>
            <person name="Schmutz J."/>
            <person name="Larimer F."/>
            <person name="Land M."/>
            <person name="Kyrpides N."/>
            <person name="Ivanova N."/>
            <person name="Richardson P."/>
        </authorList>
    </citation>
    <scope>NUCLEOTIDE SEQUENCE [LARGE SCALE GENOMIC DNA]</scope>
    <source>
        <strain>CC9902</strain>
    </source>
</reference>
<organism>
    <name type="scientific">Synechococcus sp. (strain CC9902)</name>
    <dbReference type="NCBI Taxonomy" id="316279"/>
    <lineage>
        <taxon>Bacteria</taxon>
        <taxon>Bacillati</taxon>
        <taxon>Cyanobacteriota</taxon>
        <taxon>Cyanophyceae</taxon>
        <taxon>Synechococcales</taxon>
        <taxon>Synechococcaceae</taxon>
        <taxon>Synechococcus</taxon>
    </lineage>
</organism>
<name>YQGF_SYNS9</name>
<gene>
    <name type="ordered locus">Syncc9902_0783</name>
</gene>
<evidence type="ECO:0000255" key="1">
    <source>
        <dbReference type="HAMAP-Rule" id="MF_00651"/>
    </source>
</evidence>
<sequence>MLGASVTVPSACSVLSLDVGRKRIGLAGCDPLGITVSPLPALHRGRFDNDLLVLRHHCQTRSVQGLVVGLPLDAAGQPTAQAEHCRRYGVRLAQSLGLPLAWVNEHSSTWAAGERHGLQGDRTGRLDSAAAALLLEQWLQDGPALKPAQSMAAGTGAEPIDGGS</sequence>
<keyword id="KW-0963">Cytoplasm</keyword>
<keyword id="KW-0378">Hydrolase</keyword>
<keyword id="KW-0540">Nuclease</keyword>
<keyword id="KW-1185">Reference proteome</keyword>
<keyword id="KW-0690">Ribosome biogenesis</keyword>
<comment type="function">
    <text evidence="1">Could be a nuclease involved in processing of the 5'-end of pre-16S rRNA.</text>
</comment>
<comment type="subcellular location">
    <subcellularLocation>
        <location evidence="1">Cytoplasm</location>
    </subcellularLocation>
</comment>
<comment type="similarity">
    <text evidence="1">Belongs to the YqgF nuclease family.</text>
</comment>
<dbReference type="EC" id="3.1.-.-" evidence="1"/>
<dbReference type="EMBL" id="CP000097">
    <property type="protein sequence ID" value="ABB25751.1"/>
    <property type="molecule type" value="Genomic_DNA"/>
</dbReference>
<dbReference type="RefSeq" id="WP_011359591.1">
    <property type="nucleotide sequence ID" value="NC_007513.1"/>
</dbReference>
<dbReference type="SMR" id="Q3AYS6"/>
<dbReference type="STRING" id="316279.Syncc9902_0783"/>
<dbReference type="KEGG" id="sye:Syncc9902_0783"/>
<dbReference type="eggNOG" id="COG0816">
    <property type="taxonomic scope" value="Bacteria"/>
</dbReference>
<dbReference type="HOGENOM" id="CLU_098240_3_1_3"/>
<dbReference type="OrthoDB" id="9796140at2"/>
<dbReference type="Proteomes" id="UP000002712">
    <property type="component" value="Chromosome"/>
</dbReference>
<dbReference type="GO" id="GO:0005829">
    <property type="term" value="C:cytosol"/>
    <property type="evidence" value="ECO:0007669"/>
    <property type="project" value="TreeGrafter"/>
</dbReference>
<dbReference type="GO" id="GO:0004518">
    <property type="term" value="F:nuclease activity"/>
    <property type="evidence" value="ECO:0007669"/>
    <property type="project" value="UniProtKB-KW"/>
</dbReference>
<dbReference type="GO" id="GO:0000967">
    <property type="term" value="P:rRNA 5'-end processing"/>
    <property type="evidence" value="ECO:0007669"/>
    <property type="project" value="UniProtKB-UniRule"/>
</dbReference>
<dbReference type="CDD" id="cd16964">
    <property type="entry name" value="YqgF"/>
    <property type="match status" value="1"/>
</dbReference>
<dbReference type="Gene3D" id="3.30.420.140">
    <property type="entry name" value="YqgF/RNase H-like domain"/>
    <property type="match status" value="1"/>
</dbReference>
<dbReference type="HAMAP" id="MF_00651">
    <property type="entry name" value="Nuclease_YqgF"/>
    <property type="match status" value="1"/>
</dbReference>
<dbReference type="InterPro" id="IPR012337">
    <property type="entry name" value="RNaseH-like_sf"/>
</dbReference>
<dbReference type="InterPro" id="IPR005227">
    <property type="entry name" value="YqgF"/>
</dbReference>
<dbReference type="InterPro" id="IPR006641">
    <property type="entry name" value="YqgF/RNaseH-like_dom"/>
</dbReference>
<dbReference type="InterPro" id="IPR037027">
    <property type="entry name" value="YqgF/RNaseH-like_dom_sf"/>
</dbReference>
<dbReference type="NCBIfam" id="TIGR00250">
    <property type="entry name" value="RNAse_H_YqgF"/>
    <property type="match status" value="1"/>
</dbReference>
<dbReference type="PANTHER" id="PTHR33317">
    <property type="entry name" value="POLYNUCLEOTIDYL TRANSFERASE, RIBONUCLEASE H-LIKE SUPERFAMILY PROTEIN"/>
    <property type="match status" value="1"/>
</dbReference>
<dbReference type="PANTHER" id="PTHR33317:SF4">
    <property type="entry name" value="POLYNUCLEOTIDYL TRANSFERASE, RIBONUCLEASE H-LIKE SUPERFAMILY PROTEIN"/>
    <property type="match status" value="1"/>
</dbReference>
<dbReference type="Pfam" id="PF03652">
    <property type="entry name" value="RuvX"/>
    <property type="match status" value="1"/>
</dbReference>
<dbReference type="SMART" id="SM00732">
    <property type="entry name" value="YqgFc"/>
    <property type="match status" value="1"/>
</dbReference>
<dbReference type="SUPFAM" id="SSF53098">
    <property type="entry name" value="Ribonuclease H-like"/>
    <property type="match status" value="1"/>
</dbReference>